<gene>
    <name evidence="1" type="primary">galK</name>
    <name type="ordered locus">APJL_1012</name>
</gene>
<reference key="1">
    <citation type="journal article" date="2008" name="PLoS ONE">
        <title>Genome biology of Actinobacillus pleuropneumoniae JL03, an isolate of serotype 3 prevalent in China.</title>
        <authorList>
            <person name="Xu Z."/>
            <person name="Zhou Y."/>
            <person name="Li L."/>
            <person name="Zhou R."/>
            <person name="Xiao S."/>
            <person name="Wan Y."/>
            <person name="Zhang S."/>
            <person name="Wang K."/>
            <person name="Li W."/>
            <person name="Li L."/>
            <person name="Jin H."/>
            <person name="Kang M."/>
            <person name="Dalai B."/>
            <person name="Li T."/>
            <person name="Liu L."/>
            <person name="Cheng Y."/>
            <person name="Zhang L."/>
            <person name="Xu T."/>
            <person name="Zheng H."/>
            <person name="Pu S."/>
            <person name="Wang B."/>
            <person name="Gu W."/>
            <person name="Zhang X.L."/>
            <person name="Zhu G.-F."/>
            <person name="Wang S."/>
            <person name="Zhao G.-P."/>
            <person name="Chen H."/>
        </authorList>
    </citation>
    <scope>NUCLEOTIDE SEQUENCE [LARGE SCALE GENOMIC DNA]</scope>
    <source>
        <strain>JL03</strain>
    </source>
</reference>
<dbReference type="EC" id="2.7.1.6" evidence="1"/>
<dbReference type="EMBL" id="CP000687">
    <property type="protein sequence ID" value="ABY69570.1"/>
    <property type="molecule type" value="Genomic_DNA"/>
</dbReference>
<dbReference type="RefSeq" id="WP_005608209.1">
    <property type="nucleotide sequence ID" value="NC_010278.1"/>
</dbReference>
<dbReference type="SMR" id="B0BPT5"/>
<dbReference type="KEGG" id="apj:APJL_1012"/>
<dbReference type="HOGENOM" id="CLU_017814_2_1_6"/>
<dbReference type="UniPathway" id="UPA00214"/>
<dbReference type="Proteomes" id="UP000008547">
    <property type="component" value="Chromosome"/>
</dbReference>
<dbReference type="GO" id="GO:0005829">
    <property type="term" value="C:cytosol"/>
    <property type="evidence" value="ECO:0007669"/>
    <property type="project" value="TreeGrafter"/>
</dbReference>
<dbReference type="GO" id="GO:0005524">
    <property type="term" value="F:ATP binding"/>
    <property type="evidence" value="ECO:0007669"/>
    <property type="project" value="UniProtKB-UniRule"/>
</dbReference>
<dbReference type="GO" id="GO:0004335">
    <property type="term" value="F:galactokinase activity"/>
    <property type="evidence" value="ECO:0007669"/>
    <property type="project" value="UniProtKB-UniRule"/>
</dbReference>
<dbReference type="GO" id="GO:0000287">
    <property type="term" value="F:magnesium ion binding"/>
    <property type="evidence" value="ECO:0007669"/>
    <property type="project" value="UniProtKB-UniRule"/>
</dbReference>
<dbReference type="GO" id="GO:0006012">
    <property type="term" value="P:galactose metabolic process"/>
    <property type="evidence" value="ECO:0007669"/>
    <property type="project" value="UniProtKB-UniRule"/>
</dbReference>
<dbReference type="FunFam" id="3.30.230.10:FF:000017">
    <property type="entry name" value="Galactokinase"/>
    <property type="match status" value="1"/>
</dbReference>
<dbReference type="FunFam" id="3.30.70.890:FF:000001">
    <property type="entry name" value="Galactokinase"/>
    <property type="match status" value="1"/>
</dbReference>
<dbReference type="Gene3D" id="3.30.230.10">
    <property type="match status" value="1"/>
</dbReference>
<dbReference type="Gene3D" id="3.30.70.890">
    <property type="entry name" value="GHMP kinase, C-terminal domain"/>
    <property type="match status" value="1"/>
</dbReference>
<dbReference type="HAMAP" id="MF_00246">
    <property type="entry name" value="Galactokinase"/>
    <property type="match status" value="1"/>
</dbReference>
<dbReference type="InterPro" id="IPR000705">
    <property type="entry name" value="Galactokinase"/>
</dbReference>
<dbReference type="InterPro" id="IPR022963">
    <property type="entry name" value="Galactokinase_bac"/>
</dbReference>
<dbReference type="InterPro" id="IPR019741">
    <property type="entry name" value="Galactokinase_CS"/>
</dbReference>
<dbReference type="InterPro" id="IPR019539">
    <property type="entry name" value="GalKase_N"/>
</dbReference>
<dbReference type="InterPro" id="IPR013750">
    <property type="entry name" value="GHMP_kinase_C_dom"/>
</dbReference>
<dbReference type="InterPro" id="IPR036554">
    <property type="entry name" value="GHMP_kinase_C_sf"/>
</dbReference>
<dbReference type="InterPro" id="IPR006204">
    <property type="entry name" value="GHMP_kinase_N_dom"/>
</dbReference>
<dbReference type="InterPro" id="IPR006203">
    <property type="entry name" value="GHMP_knse_ATP-bd_CS"/>
</dbReference>
<dbReference type="InterPro" id="IPR006206">
    <property type="entry name" value="Mevalonate/galactokinase"/>
</dbReference>
<dbReference type="InterPro" id="IPR020568">
    <property type="entry name" value="Ribosomal_Su5_D2-typ_SF"/>
</dbReference>
<dbReference type="InterPro" id="IPR014721">
    <property type="entry name" value="Ribsml_uS5_D2-typ_fold_subgr"/>
</dbReference>
<dbReference type="NCBIfam" id="TIGR00131">
    <property type="entry name" value="gal_kin"/>
    <property type="match status" value="1"/>
</dbReference>
<dbReference type="NCBIfam" id="NF003472">
    <property type="entry name" value="PRK05101.1"/>
    <property type="match status" value="1"/>
</dbReference>
<dbReference type="PANTHER" id="PTHR10457:SF7">
    <property type="entry name" value="GALACTOKINASE-RELATED"/>
    <property type="match status" value="1"/>
</dbReference>
<dbReference type="PANTHER" id="PTHR10457">
    <property type="entry name" value="MEVALONATE KINASE/GALACTOKINASE"/>
    <property type="match status" value="1"/>
</dbReference>
<dbReference type="Pfam" id="PF10509">
    <property type="entry name" value="GalKase_gal_bdg"/>
    <property type="match status" value="1"/>
</dbReference>
<dbReference type="Pfam" id="PF08544">
    <property type="entry name" value="GHMP_kinases_C"/>
    <property type="match status" value="1"/>
</dbReference>
<dbReference type="Pfam" id="PF00288">
    <property type="entry name" value="GHMP_kinases_N"/>
    <property type="match status" value="1"/>
</dbReference>
<dbReference type="PIRSF" id="PIRSF000530">
    <property type="entry name" value="Galactokinase"/>
    <property type="match status" value="1"/>
</dbReference>
<dbReference type="PRINTS" id="PR00473">
    <property type="entry name" value="GALCTOKINASE"/>
</dbReference>
<dbReference type="PRINTS" id="PR00959">
    <property type="entry name" value="MEVGALKINASE"/>
</dbReference>
<dbReference type="SUPFAM" id="SSF55060">
    <property type="entry name" value="GHMP Kinase, C-terminal domain"/>
    <property type="match status" value="1"/>
</dbReference>
<dbReference type="SUPFAM" id="SSF54211">
    <property type="entry name" value="Ribosomal protein S5 domain 2-like"/>
    <property type="match status" value="1"/>
</dbReference>
<dbReference type="PROSITE" id="PS00106">
    <property type="entry name" value="GALACTOKINASE"/>
    <property type="match status" value="1"/>
</dbReference>
<dbReference type="PROSITE" id="PS00627">
    <property type="entry name" value="GHMP_KINASES_ATP"/>
    <property type="match status" value="1"/>
</dbReference>
<accession>B0BPT5</accession>
<feature type="chain" id="PRO_1000100825" description="Galactokinase">
    <location>
        <begin position="1"/>
        <end position="384"/>
    </location>
</feature>
<feature type="active site" description="Proton acceptor" evidence="1">
    <location>
        <position position="173"/>
    </location>
</feature>
<feature type="binding site" evidence="1">
    <location>
        <begin position="34"/>
        <end position="37"/>
    </location>
    <ligand>
        <name>substrate</name>
    </ligand>
</feature>
<feature type="binding site" evidence="1">
    <location>
        <begin position="123"/>
        <end position="129"/>
    </location>
    <ligand>
        <name>ATP</name>
        <dbReference type="ChEBI" id="CHEBI:30616"/>
    </ligand>
</feature>
<feature type="binding site" evidence="1">
    <location>
        <position position="129"/>
    </location>
    <ligand>
        <name>Mg(2+)</name>
        <dbReference type="ChEBI" id="CHEBI:18420"/>
    </ligand>
</feature>
<feature type="binding site" evidence="1">
    <location>
        <position position="161"/>
    </location>
    <ligand>
        <name>Mg(2+)</name>
        <dbReference type="ChEBI" id="CHEBI:18420"/>
    </ligand>
</feature>
<feature type="binding site" evidence="1">
    <location>
        <position position="222"/>
    </location>
    <ligand>
        <name>substrate</name>
    </ligand>
</feature>
<feature type="site" description="Transition state stabilizer" evidence="1">
    <location>
        <position position="28"/>
    </location>
</feature>
<comment type="function">
    <text evidence="1">Catalyzes the transfer of the gamma-phosphate of ATP to D-galactose to form alpha-D-galactose-1-phosphate (Gal-1-P).</text>
</comment>
<comment type="catalytic activity">
    <reaction evidence="1">
        <text>alpha-D-galactose + ATP = alpha-D-galactose 1-phosphate + ADP + H(+)</text>
        <dbReference type="Rhea" id="RHEA:13553"/>
        <dbReference type="ChEBI" id="CHEBI:15378"/>
        <dbReference type="ChEBI" id="CHEBI:28061"/>
        <dbReference type="ChEBI" id="CHEBI:30616"/>
        <dbReference type="ChEBI" id="CHEBI:58336"/>
        <dbReference type="ChEBI" id="CHEBI:456216"/>
        <dbReference type="EC" id="2.7.1.6"/>
    </reaction>
</comment>
<comment type="pathway">
    <text evidence="1">Carbohydrate metabolism; galactose metabolism.</text>
</comment>
<comment type="subcellular location">
    <subcellularLocation>
        <location evidence="1">Cytoplasm</location>
    </subcellularLocation>
</comment>
<comment type="similarity">
    <text evidence="1">Belongs to the GHMP kinase family. GalK subfamily.</text>
</comment>
<proteinExistence type="inferred from homology"/>
<keyword id="KW-0067">ATP-binding</keyword>
<keyword id="KW-0119">Carbohydrate metabolism</keyword>
<keyword id="KW-0963">Cytoplasm</keyword>
<keyword id="KW-0299">Galactose metabolism</keyword>
<keyword id="KW-0418">Kinase</keyword>
<keyword id="KW-0460">Magnesium</keyword>
<keyword id="KW-0479">Metal-binding</keyword>
<keyword id="KW-0547">Nucleotide-binding</keyword>
<keyword id="KW-0808">Transferase</keyword>
<sequence length="384" mass="42314">MKPQQLATQKFSEHYGYSAAQTVFAPGRVNIIGEHTDYNDGFVMPCAINYGMAVSFSKRDDSVWRVYAIDIDEQDEFDLSRPIEPSEHKWANYVRGVVKYIQEKCPEFKQGADLAMTSDVPMSSGLSSSAALEISIGKTAQVLGDLPLSLAEIALIGQQAENKFVGANCGNMDQLTSALGQKDQVIMIDCRSLEITPTPVPHGYSIAIINSNVKHDLVTGEYNSRRQECEFAAKFFGVKALRDVTPAQFIERAAELQAENELAYKRAKHIISENQRVLEAVEALQAKDMVKLGQLMAGSHDSMRDDFEITIPEIDYLVELAQVAIGKNGGARMTGGGFGGCIVCLVPDEKVEHLRRIIADNYEKQTGIKETFHLCTACDGVHLI</sequence>
<evidence type="ECO:0000255" key="1">
    <source>
        <dbReference type="HAMAP-Rule" id="MF_00246"/>
    </source>
</evidence>
<organism>
    <name type="scientific">Actinobacillus pleuropneumoniae serotype 3 (strain JL03)</name>
    <dbReference type="NCBI Taxonomy" id="434271"/>
    <lineage>
        <taxon>Bacteria</taxon>
        <taxon>Pseudomonadati</taxon>
        <taxon>Pseudomonadota</taxon>
        <taxon>Gammaproteobacteria</taxon>
        <taxon>Pasteurellales</taxon>
        <taxon>Pasteurellaceae</taxon>
        <taxon>Actinobacillus</taxon>
    </lineage>
</organism>
<name>GAL1_ACTPJ</name>
<protein>
    <recommendedName>
        <fullName evidence="1">Galactokinase</fullName>
        <ecNumber evidence="1">2.7.1.6</ecNumber>
    </recommendedName>
    <alternativeName>
        <fullName evidence="1">Galactose kinase</fullName>
    </alternativeName>
</protein>